<gene>
    <name type="primary">Lsm8</name>
</gene>
<organism>
    <name type="scientific">Mus musculus</name>
    <name type="common">Mouse</name>
    <dbReference type="NCBI Taxonomy" id="10090"/>
    <lineage>
        <taxon>Eukaryota</taxon>
        <taxon>Metazoa</taxon>
        <taxon>Chordata</taxon>
        <taxon>Craniata</taxon>
        <taxon>Vertebrata</taxon>
        <taxon>Euteleostomi</taxon>
        <taxon>Mammalia</taxon>
        <taxon>Eutheria</taxon>
        <taxon>Euarchontoglires</taxon>
        <taxon>Glires</taxon>
        <taxon>Rodentia</taxon>
        <taxon>Myomorpha</taxon>
        <taxon>Muroidea</taxon>
        <taxon>Muridae</taxon>
        <taxon>Murinae</taxon>
        <taxon>Mus</taxon>
        <taxon>Mus</taxon>
    </lineage>
</organism>
<feature type="initiator methionine" description="Removed" evidence="1">
    <location>
        <position position="1"/>
    </location>
</feature>
<feature type="chain" id="PRO_0000125583" description="U6 snRNA-associated Sm-like protein LSm8">
    <location>
        <begin position="2"/>
        <end position="96"/>
    </location>
</feature>
<feature type="domain" description="Sm" evidence="2">
    <location>
        <begin position="1"/>
        <end position="76"/>
    </location>
</feature>
<feature type="modified residue" description="N-acetylthreonine" evidence="1">
    <location>
        <position position="2"/>
    </location>
</feature>
<comment type="function">
    <text evidence="1">Plays a role in pre-mRNA splicing as component of the U4/U6-U5 tri-snRNP complex that is involved in spliceosome assembly, and as component of the precatalytic spliceosome (spliceosome B complex). The heptameric LSM2-8 complex binds specifically to the 3'-terminal U-tract of U6 snRNA.</text>
</comment>
<comment type="subunit">
    <text evidence="1">Component of the precatalytic spliceosome (spliceosome B complex). Component of the U4/U6-U5 tri-snRNP complex, a building block of the precatalytic spliceosome (spliceosome B complex). The U4/U6-U5 tri-snRNP complex is composed of the U4, U6 and U5 snRNAs and at least PRPF3, PRPF4, PRPF6, PRPF8, PRPF31, SNRNP200, TXNL4A, SNRNP40, SNRPB, SNRPD1, SNRPD2, SNRPD3, SNRPE, SNRPF, SNRPG, DDX23, CD2BP2, PPIH, SNU13, EFTUD2, SART1 and USP39, plus LSM2, LSM3, LSM4, LSM5, LSM6, LSM7 and LSM8. LSM2, LSM3, LSM4, LSM5, LSM6, LSM7 and LSM8 form a heptameric, ring-shaped subcomplex (the LSM2-8 complex) that is part of the U4/U6-U5 tri-snRNP complex and the precatalytic spliceosome.</text>
</comment>
<comment type="subcellular location">
    <subcellularLocation>
        <location evidence="1">Nucleus</location>
    </subcellularLocation>
</comment>
<comment type="similarity">
    <text evidence="3">Belongs to the snRNP Sm proteins family.</text>
</comment>
<protein>
    <recommendedName>
        <fullName>U6 snRNA-associated Sm-like protein LSm8</fullName>
    </recommendedName>
</protein>
<name>LSM8_MOUSE</name>
<dbReference type="EMBL" id="AK088664">
    <property type="protein sequence ID" value="BAC40488.1"/>
    <property type="molecule type" value="mRNA"/>
</dbReference>
<dbReference type="EMBL" id="AK167674">
    <property type="protein sequence ID" value="BAE39723.1"/>
    <property type="molecule type" value="mRNA"/>
</dbReference>
<dbReference type="EMBL" id="BC019458">
    <property type="protein sequence ID" value="AAH19458.1"/>
    <property type="molecule type" value="mRNA"/>
</dbReference>
<dbReference type="CCDS" id="CCDS39433.1"/>
<dbReference type="RefSeq" id="NP_598700.1">
    <property type="nucleotide sequence ID" value="NM_133939.1"/>
</dbReference>
<dbReference type="SMR" id="Q6ZWM4"/>
<dbReference type="BioGRID" id="218166">
    <property type="interactions" value="21"/>
</dbReference>
<dbReference type="FunCoup" id="Q6ZWM4">
    <property type="interactions" value="2151"/>
</dbReference>
<dbReference type="STRING" id="10090.ENSMUSP00000057238"/>
<dbReference type="PhosphoSitePlus" id="Q6ZWM4"/>
<dbReference type="jPOST" id="Q6ZWM4"/>
<dbReference type="PaxDb" id="10090-ENSMUSP00000057238"/>
<dbReference type="PeptideAtlas" id="Q6ZWM4"/>
<dbReference type="ProteomicsDB" id="252680"/>
<dbReference type="Pumba" id="Q6ZWM4"/>
<dbReference type="TopDownProteomics" id="Q6ZWM4"/>
<dbReference type="Antibodypedia" id="17509">
    <property type="antibodies" value="62 antibodies from 22 providers"/>
</dbReference>
<dbReference type="DNASU" id="76522"/>
<dbReference type="Ensembl" id="ENSMUST00000056398.11">
    <property type="protein sequence ID" value="ENSMUSP00000057238.9"/>
    <property type="gene ID" value="ENSMUSG00000044155.12"/>
</dbReference>
<dbReference type="GeneID" id="76522"/>
<dbReference type="KEGG" id="mmu:76522"/>
<dbReference type="UCSC" id="uc009bao.1">
    <property type="organism name" value="mouse"/>
</dbReference>
<dbReference type="AGR" id="MGI:1923772"/>
<dbReference type="CTD" id="51691"/>
<dbReference type="MGI" id="MGI:1923772">
    <property type="gene designation" value="Lsm8"/>
</dbReference>
<dbReference type="VEuPathDB" id="HostDB:ENSMUSG00000044155"/>
<dbReference type="eggNOG" id="KOG1784">
    <property type="taxonomic scope" value="Eukaryota"/>
</dbReference>
<dbReference type="GeneTree" id="ENSGT00730000111212"/>
<dbReference type="HOGENOM" id="CLU_076902_8_2_1"/>
<dbReference type="InParanoid" id="Q6ZWM4"/>
<dbReference type="OMA" id="AACDQTT"/>
<dbReference type="OrthoDB" id="16976at9989"/>
<dbReference type="PhylomeDB" id="Q6ZWM4"/>
<dbReference type="TreeFam" id="TF314555"/>
<dbReference type="Reactome" id="R-MMU-72163">
    <property type="pathway name" value="mRNA Splicing - Major Pathway"/>
</dbReference>
<dbReference type="BioGRID-ORCS" id="76522">
    <property type="hits" value="20 hits in 65 CRISPR screens"/>
</dbReference>
<dbReference type="ChiTaRS" id="Lsm8">
    <property type="organism name" value="mouse"/>
</dbReference>
<dbReference type="PRO" id="PR:Q6ZWM4"/>
<dbReference type="Proteomes" id="UP000000589">
    <property type="component" value="Chromosome 6"/>
</dbReference>
<dbReference type="RNAct" id="Q6ZWM4">
    <property type="molecule type" value="protein"/>
</dbReference>
<dbReference type="Bgee" id="ENSMUSG00000044155">
    <property type="expression patterns" value="Expressed in primitive streak and 266 other cell types or tissues"/>
</dbReference>
<dbReference type="ExpressionAtlas" id="Q6ZWM4">
    <property type="expression patterns" value="baseline and differential"/>
</dbReference>
<dbReference type="GO" id="GO:0120115">
    <property type="term" value="C:Lsm2-8 complex"/>
    <property type="evidence" value="ECO:0000250"/>
    <property type="project" value="UniProtKB"/>
</dbReference>
<dbReference type="GO" id="GO:0005634">
    <property type="term" value="C:nucleus"/>
    <property type="evidence" value="ECO:0000250"/>
    <property type="project" value="UniProtKB"/>
</dbReference>
<dbReference type="GO" id="GO:0071005">
    <property type="term" value="C:U2-type precatalytic spliceosome"/>
    <property type="evidence" value="ECO:0000250"/>
    <property type="project" value="UniProtKB"/>
</dbReference>
<dbReference type="GO" id="GO:0046540">
    <property type="term" value="C:U4/U6 x U5 tri-snRNP complex"/>
    <property type="evidence" value="ECO:0000250"/>
    <property type="project" value="UniProtKB"/>
</dbReference>
<dbReference type="GO" id="GO:0005688">
    <property type="term" value="C:U6 snRNP"/>
    <property type="evidence" value="ECO:0007669"/>
    <property type="project" value="InterPro"/>
</dbReference>
<dbReference type="GO" id="GO:0003723">
    <property type="term" value="F:RNA binding"/>
    <property type="evidence" value="ECO:0007669"/>
    <property type="project" value="UniProtKB-KW"/>
</dbReference>
<dbReference type="GO" id="GO:0000398">
    <property type="term" value="P:mRNA splicing, via spliceosome"/>
    <property type="evidence" value="ECO:0000250"/>
    <property type="project" value="UniProtKB"/>
</dbReference>
<dbReference type="CDD" id="cd01727">
    <property type="entry name" value="LSm8"/>
    <property type="match status" value="1"/>
</dbReference>
<dbReference type="FunFam" id="2.30.30.100:FF:000022">
    <property type="entry name" value="U6 snRNA-associated Sm-like protein LSm8"/>
    <property type="match status" value="1"/>
</dbReference>
<dbReference type="Gene3D" id="2.30.30.100">
    <property type="match status" value="1"/>
</dbReference>
<dbReference type="InterPro" id="IPR034103">
    <property type="entry name" value="Lsm8"/>
</dbReference>
<dbReference type="InterPro" id="IPR010920">
    <property type="entry name" value="LSM_dom_sf"/>
</dbReference>
<dbReference type="InterPro" id="IPR044642">
    <property type="entry name" value="PTHR15588"/>
</dbReference>
<dbReference type="InterPro" id="IPR047575">
    <property type="entry name" value="Sm"/>
</dbReference>
<dbReference type="InterPro" id="IPR001163">
    <property type="entry name" value="Sm_dom_euk/arc"/>
</dbReference>
<dbReference type="PANTHER" id="PTHR15588">
    <property type="entry name" value="LSM1"/>
    <property type="match status" value="1"/>
</dbReference>
<dbReference type="PANTHER" id="PTHR15588:SF9">
    <property type="entry name" value="U6 SNRNA-ASSOCIATED SM-LIKE PROTEIN LSM8"/>
    <property type="match status" value="1"/>
</dbReference>
<dbReference type="Pfam" id="PF01423">
    <property type="entry name" value="LSM"/>
    <property type="match status" value="1"/>
</dbReference>
<dbReference type="SMART" id="SM00651">
    <property type="entry name" value="Sm"/>
    <property type="match status" value="1"/>
</dbReference>
<dbReference type="SUPFAM" id="SSF50182">
    <property type="entry name" value="Sm-like ribonucleoproteins"/>
    <property type="match status" value="1"/>
</dbReference>
<dbReference type="PROSITE" id="PS52002">
    <property type="entry name" value="SM"/>
    <property type="match status" value="1"/>
</dbReference>
<sequence>MTSALENYINRTVAVITSDGRMIVGTLKGFDQTINLILDESHERVFSSSQGVEQVVLGLYIVRGDNVAVIGEIDEETDSALDLGNIRAEPLNSVAH</sequence>
<accession>Q6ZWM4</accession>
<accession>Q3TIX3</accession>
<evidence type="ECO:0000250" key="1">
    <source>
        <dbReference type="UniProtKB" id="O95777"/>
    </source>
</evidence>
<evidence type="ECO:0000255" key="2">
    <source>
        <dbReference type="PROSITE-ProRule" id="PRU01346"/>
    </source>
</evidence>
<evidence type="ECO:0000305" key="3"/>
<reference key="1">
    <citation type="journal article" date="2005" name="Science">
        <title>The transcriptional landscape of the mammalian genome.</title>
        <authorList>
            <person name="Carninci P."/>
            <person name="Kasukawa T."/>
            <person name="Katayama S."/>
            <person name="Gough J."/>
            <person name="Frith M.C."/>
            <person name="Maeda N."/>
            <person name="Oyama R."/>
            <person name="Ravasi T."/>
            <person name="Lenhard B."/>
            <person name="Wells C."/>
            <person name="Kodzius R."/>
            <person name="Shimokawa K."/>
            <person name="Bajic V.B."/>
            <person name="Brenner S.E."/>
            <person name="Batalov S."/>
            <person name="Forrest A.R."/>
            <person name="Zavolan M."/>
            <person name="Davis M.J."/>
            <person name="Wilming L.G."/>
            <person name="Aidinis V."/>
            <person name="Allen J.E."/>
            <person name="Ambesi-Impiombato A."/>
            <person name="Apweiler R."/>
            <person name="Aturaliya R.N."/>
            <person name="Bailey T.L."/>
            <person name="Bansal M."/>
            <person name="Baxter L."/>
            <person name="Beisel K.W."/>
            <person name="Bersano T."/>
            <person name="Bono H."/>
            <person name="Chalk A.M."/>
            <person name="Chiu K.P."/>
            <person name="Choudhary V."/>
            <person name="Christoffels A."/>
            <person name="Clutterbuck D.R."/>
            <person name="Crowe M.L."/>
            <person name="Dalla E."/>
            <person name="Dalrymple B.P."/>
            <person name="de Bono B."/>
            <person name="Della Gatta G."/>
            <person name="di Bernardo D."/>
            <person name="Down T."/>
            <person name="Engstrom P."/>
            <person name="Fagiolini M."/>
            <person name="Faulkner G."/>
            <person name="Fletcher C.F."/>
            <person name="Fukushima T."/>
            <person name="Furuno M."/>
            <person name="Futaki S."/>
            <person name="Gariboldi M."/>
            <person name="Georgii-Hemming P."/>
            <person name="Gingeras T.R."/>
            <person name="Gojobori T."/>
            <person name="Green R.E."/>
            <person name="Gustincich S."/>
            <person name="Harbers M."/>
            <person name="Hayashi Y."/>
            <person name="Hensch T.K."/>
            <person name="Hirokawa N."/>
            <person name="Hill D."/>
            <person name="Huminiecki L."/>
            <person name="Iacono M."/>
            <person name="Ikeo K."/>
            <person name="Iwama A."/>
            <person name="Ishikawa T."/>
            <person name="Jakt M."/>
            <person name="Kanapin A."/>
            <person name="Katoh M."/>
            <person name="Kawasawa Y."/>
            <person name="Kelso J."/>
            <person name="Kitamura H."/>
            <person name="Kitano H."/>
            <person name="Kollias G."/>
            <person name="Krishnan S.P."/>
            <person name="Kruger A."/>
            <person name="Kummerfeld S.K."/>
            <person name="Kurochkin I.V."/>
            <person name="Lareau L.F."/>
            <person name="Lazarevic D."/>
            <person name="Lipovich L."/>
            <person name="Liu J."/>
            <person name="Liuni S."/>
            <person name="McWilliam S."/>
            <person name="Madan Babu M."/>
            <person name="Madera M."/>
            <person name="Marchionni L."/>
            <person name="Matsuda H."/>
            <person name="Matsuzawa S."/>
            <person name="Miki H."/>
            <person name="Mignone F."/>
            <person name="Miyake S."/>
            <person name="Morris K."/>
            <person name="Mottagui-Tabar S."/>
            <person name="Mulder N."/>
            <person name="Nakano N."/>
            <person name="Nakauchi H."/>
            <person name="Ng P."/>
            <person name="Nilsson R."/>
            <person name="Nishiguchi S."/>
            <person name="Nishikawa S."/>
            <person name="Nori F."/>
            <person name="Ohara O."/>
            <person name="Okazaki Y."/>
            <person name="Orlando V."/>
            <person name="Pang K.C."/>
            <person name="Pavan W.J."/>
            <person name="Pavesi G."/>
            <person name="Pesole G."/>
            <person name="Petrovsky N."/>
            <person name="Piazza S."/>
            <person name="Reed J."/>
            <person name="Reid J.F."/>
            <person name="Ring B.Z."/>
            <person name="Ringwald M."/>
            <person name="Rost B."/>
            <person name="Ruan Y."/>
            <person name="Salzberg S.L."/>
            <person name="Sandelin A."/>
            <person name="Schneider C."/>
            <person name="Schoenbach C."/>
            <person name="Sekiguchi K."/>
            <person name="Semple C.A."/>
            <person name="Seno S."/>
            <person name="Sessa L."/>
            <person name="Sheng Y."/>
            <person name="Shibata Y."/>
            <person name="Shimada H."/>
            <person name="Shimada K."/>
            <person name="Silva D."/>
            <person name="Sinclair B."/>
            <person name="Sperling S."/>
            <person name="Stupka E."/>
            <person name="Sugiura K."/>
            <person name="Sultana R."/>
            <person name="Takenaka Y."/>
            <person name="Taki K."/>
            <person name="Tammoja K."/>
            <person name="Tan S.L."/>
            <person name="Tang S."/>
            <person name="Taylor M.S."/>
            <person name="Tegner J."/>
            <person name="Teichmann S.A."/>
            <person name="Ueda H.R."/>
            <person name="van Nimwegen E."/>
            <person name="Verardo R."/>
            <person name="Wei C.L."/>
            <person name="Yagi K."/>
            <person name="Yamanishi H."/>
            <person name="Zabarovsky E."/>
            <person name="Zhu S."/>
            <person name="Zimmer A."/>
            <person name="Hide W."/>
            <person name="Bult C."/>
            <person name="Grimmond S.M."/>
            <person name="Teasdale R.D."/>
            <person name="Liu E.T."/>
            <person name="Brusic V."/>
            <person name="Quackenbush J."/>
            <person name="Wahlestedt C."/>
            <person name="Mattick J.S."/>
            <person name="Hume D.A."/>
            <person name="Kai C."/>
            <person name="Sasaki D."/>
            <person name="Tomaru Y."/>
            <person name="Fukuda S."/>
            <person name="Kanamori-Katayama M."/>
            <person name="Suzuki M."/>
            <person name="Aoki J."/>
            <person name="Arakawa T."/>
            <person name="Iida J."/>
            <person name="Imamura K."/>
            <person name="Itoh M."/>
            <person name="Kato T."/>
            <person name="Kawaji H."/>
            <person name="Kawagashira N."/>
            <person name="Kawashima T."/>
            <person name="Kojima M."/>
            <person name="Kondo S."/>
            <person name="Konno H."/>
            <person name="Nakano K."/>
            <person name="Ninomiya N."/>
            <person name="Nishio T."/>
            <person name="Okada M."/>
            <person name="Plessy C."/>
            <person name="Shibata K."/>
            <person name="Shiraki T."/>
            <person name="Suzuki S."/>
            <person name="Tagami M."/>
            <person name="Waki K."/>
            <person name="Watahiki A."/>
            <person name="Okamura-Oho Y."/>
            <person name="Suzuki H."/>
            <person name="Kawai J."/>
            <person name="Hayashizaki Y."/>
        </authorList>
    </citation>
    <scope>NUCLEOTIDE SEQUENCE [LARGE SCALE MRNA]</scope>
    <source>
        <strain>C57BL/6J</strain>
        <strain>NOD</strain>
        <tissue>Placenta</tissue>
        <tissue>Thymus</tissue>
    </source>
</reference>
<reference key="2">
    <citation type="journal article" date="2004" name="Genome Res.">
        <title>The status, quality, and expansion of the NIH full-length cDNA project: the Mammalian Gene Collection (MGC).</title>
        <authorList>
            <consortium name="The MGC Project Team"/>
        </authorList>
    </citation>
    <scope>NUCLEOTIDE SEQUENCE [LARGE SCALE MRNA]</scope>
    <source>
        <strain>FVB/N</strain>
        <tissue>Mammary tumor</tissue>
    </source>
</reference>
<reference key="3">
    <citation type="journal article" date="2010" name="Cell">
        <title>A tissue-specific atlas of mouse protein phosphorylation and expression.</title>
        <authorList>
            <person name="Huttlin E.L."/>
            <person name="Jedrychowski M.P."/>
            <person name="Elias J.E."/>
            <person name="Goswami T."/>
            <person name="Rad R."/>
            <person name="Beausoleil S.A."/>
            <person name="Villen J."/>
            <person name="Haas W."/>
            <person name="Sowa M.E."/>
            <person name="Gygi S.P."/>
        </authorList>
    </citation>
    <scope>IDENTIFICATION BY MASS SPECTROMETRY [LARGE SCALE ANALYSIS]</scope>
    <source>
        <tissue>Brain</tissue>
        <tissue>Brown adipose tissue</tissue>
        <tissue>Heart</tissue>
        <tissue>Kidney</tissue>
        <tissue>Liver</tissue>
        <tissue>Lung</tissue>
        <tissue>Pancreas</tissue>
        <tissue>Spleen</tissue>
        <tissue>Testis</tissue>
    </source>
</reference>
<proteinExistence type="evidence at protein level"/>
<keyword id="KW-0007">Acetylation</keyword>
<keyword id="KW-0507">mRNA processing</keyword>
<keyword id="KW-0508">mRNA splicing</keyword>
<keyword id="KW-0539">Nucleus</keyword>
<keyword id="KW-1185">Reference proteome</keyword>
<keyword id="KW-0687">Ribonucleoprotein</keyword>
<keyword id="KW-0694">RNA-binding</keyword>
<keyword id="KW-0747">Spliceosome</keyword>